<dbReference type="EC" id="2.7.13.3"/>
<dbReference type="EMBL" id="CP000253">
    <property type="protein sequence ID" value="ABD31684.1"/>
    <property type="molecule type" value="Genomic_DNA"/>
</dbReference>
<dbReference type="RefSeq" id="WP_000606546.1">
    <property type="nucleotide sequence ID" value="NZ_LS483365.1"/>
</dbReference>
<dbReference type="RefSeq" id="YP_501138.1">
    <property type="nucleotide sequence ID" value="NC_007795.1"/>
</dbReference>
<dbReference type="SMR" id="Q2FVM6"/>
<dbReference type="STRING" id="93061.SAOUHSC_02676"/>
<dbReference type="PaxDb" id="1280-SAXN108_2647"/>
<dbReference type="GeneID" id="3921238"/>
<dbReference type="KEGG" id="sao:SAOUHSC_02676"/>
<dbReference type="PATRIC" id="fig|93061.5.peg.2423"/>
<dbReference type="eggNOG" id="COG4585">
    <property type="taxonomic scope" value="Bacteria"/>
</dbReference>
<dbReference type="HOGENOM" id="CLU_000445_114_0_9"/>
<dbReference type="OrthoDB" id="9760839at2"/>
<dbReference type="PRO" id="PR:Q2FVM6"/>
<dbReference type="Proteomes" id="UP000008816">
    <property type="component" value="Chromosome"/>
</dbReference>
<dbReference type="GO" id="GO:0005737">
    <property type="term" value="C:cytoplasm"/>
    <property type="evidence" value="ECO:0007669"/>
    <property type="project" value="UniProtKB-SubCell"/>
</dbReference>
<dbReference type="GO" id="GO:0005886">
    <property type="term" value="C:plasma membrane"/>
    <property type="evidence" value="ECO:0000318"/>
    <property type="project" value="GO_Central"/>
</dbReference>
<dbReference type="GO" id="GO:0051539">
    <property type="term" value="F:4 iron, 4 sulfur cluster binding"/>
    <property type="evidence" value="ECO:0007669"/>
    <property type="project" value="UniProtKB-KW"/>
</dbReference>
<dbReference type="GO" id="GO:0005524">
    <property type="term" value="F:ATP binding"/>
    <property type="evidence" value="ECO:0007669"/>
    <property type="project" value="UniProtKB-KW"/>
</dbReference>
<dbReference type="GO" id="GO:0005506">
    <property type="term" value="F:iron ion binding"/>
    <property type="evidence" value="ECO:0007669"/>
    <property type="project" value="InterPro"/>
</dbReference>
<dbReference type="GO" id="GO:0000155">
    <property type="term" value="F:phosphorelay sensor kinase activity"/>
    <property type="evidence" value="ECO:0007669"/>
    <property type="project" value="InterPro"/>
</dbReference>
<dbReference type="GO" id="GO:0046983">
    <property type="term" value="F:protein dimerization activity"/>
    <property type="evidence" value="ECO:0007669"/>
    <property type="project" value="InterPro"/>
</dbReference>
<dbReference type="GO" id="GO:0004672">
    <property type="term" value="F:protein kinase activity"/>
    <property type="evidence" value="ECO:0000318"/>
    <property type="project" value="GO_Central"/>
</dbReference>
<dbReference type="CDD" id="cd16917">
    <property type="entry name" value="HATPase_UhpB-NarQ-NarX-like"/>
    <property type="match status" value="1"/>
</dbReference>
<dbReference type="Gene3D" id="1.20.5.1930">
    <property type="match status" value="1"/>
</dbReference>
<dbReference type="Gene3D" id="3.30.565.10">
    <property type="entry name" value="Histidine kinase-like ATPase, C-terminal domain"/>
    <property type="match status" value="1"/>
</dbReference>
<dbReference type="InterPro" id="IPR036890">
    <property type="entry name" value="HATPase_C_sf"/>
</dbReference>
<dbReference type="InterPro" id="IPR005467">
    <property type="entry name" value="His_kinase_dom"/>
</dbReference>
<dbReference type="InterPro" id="IPR050482">
    <property type="entry name" value="Sensor_HK_TwoCompSys"/>
</dbReference>
<dbReference type="InterPro" id="IPR004358">
    <property type="entry name" value="Sig_transdc_His_kin-like_C"/>
</dbReference>
<dbReference type="InterPro" id="IPR011712">
    <property type="entry name" value="Sig_transdc_His_kin_sub3_dim/P"/>
</dbReference>
<dbReference type="InterPro" id="IPR017203">
    <property type="entry name" value="Sig_transdc_His_kinase_NreB"/>
</dbReference>
<dbReference type="PANTHER" id="PTHR24421">
    <property type="entry name" value="NITRATE/NITRITE SENSOR PROTEIN NARX-RELATED"/>
    <property type="match status" value="1"/>
</dbReference>
<dbReference type="PANTHER" id="PTHR24421:SF10">
    <property type="entry name" value="NITRATE_NITRITE SENSOR PROTEIN NARQ"/>
    <property type="match status" value="1"/>
</dbReference>
<dbReference type="Pfam" id="PF02518">
    <property type="entry name" value="HATPase_c"/>
    <property type="match status" value="1"/>
</dbReference>
<dbReference type="Pfam" id="PF07730">
    <property type="entry name" value="HisKA_3"/>
    <property type="match status" value="1"/>
</dbReference>
<dbReference type="PIRSF" id="PIRSF037432">
    <property type="entry name" value="STHK_NreB"/>
    <property type="match status" value="1"/>
</dbReference>
<dbReference type="PRINTS" id="PR00344">
    <property type="entry name" value="BCTRLSENSOR"/>
</dbReference>
<dbReference type="SMART" id="SM00387">
    <property type="entry name" value="HATPase_c"/>
    <property type="match status" value="1"/>
</dbReference>
<dbReference type="SUPFAM" id="SSF55874">
    <property type="entry name" value="ATPase domain of HSP90 chaperone/DNA topoisomerase II/histidine kinase"/>
    <property type="match status" value="1"/>
</dbReference>
<dbReference type="PROSITE" id="PS50109">
    <property type="entry name" value="HIS_KIN"/>
    <property type="match status" value="1"/>
</dbReference>
<name>NREB_STAA8</name>
<comment type="function">
    <text evidence="1">Member of the two-component regulatory system NreB/NreC involved in the control of dissimilatory nitrate/nitrite reduction in response to oxygen. NreB functions as a direct oxygen sensor histidine kinase which is autophosphorylated, in the absence of oxygen, probably at the conserved histidine residue, and transfers its phosphate group probably to a conserved aspartate residue of NreC. NreB/NreC activates the expression of the nitrate (narGHJI) and nitrite (nir) reductase operons, as well as the putative nitrate transporter gene narT (By similarity).</text>
</comment>
<comment type="catalytic activity">
    <reaction>
        <text>ATP + protein L-histidine = ADP + protein N-phospho-L-histidine.</text>
        <dbReference type="EC" id="2.7.13.3"/>
    </reaction>
</comment>
<comment type="cofactor">
    <cofactor evidence="4">
        <name>[4Fe-4S] cluster</name>
        <dbReference type="ChEBI" id="CHEBI:49883"/>
    </cofactor>
    <text evidence="4">Binds 1 [4Fe-4S] cluster.</text>
</comment>
<comment type="subcellular location">
    <subcellularLocation>
        <location evidence="4">Cytoplasm</location>
    </subcellularLocation>
</comment>
<comment type="PTM">
    <text evidence="1">Autophosphorylated.</text>
</comment>
<organism>
    <name type="scientific">Staphylococcus aureus (strain NCTC 8325 / PS 47)</name>
    <dbReference type="NCBI Taxonomy" id="93061"/>
    <lineage>
        <taxon>Bacteria</taxon>
        <taxon>Bacillati</taxon>
        <taxon>Bacillota</taxon>
        <taxon>Bacilli</taxon>
        <taxon>Bacillales</taxon>
        <taxon>Staphylococcaceae</taxon>
        <taxon>Staphylococcus</taxon>
    </lineage>
</organism>
<evidence type="ECO:0000250" key="1"/>
<evidence type="ECO:0000255" key="2"/>
<evidence type="ECO:0000255" key="3">
    <source>
        <dbReference type="PROSITE-ProRule" id="PRU00107"/>
    </source>
</evidence>
<evidence type="ECO:0000305" key="4"/>
<feature type="chain" id="PRO_0000349334" description="Oxygen sensor histidine kinase NreB">
    <location>
        <begin position="1"/>
        <end position="344"/>
    </location>
</feature>
<feature type="domain" description="Histidine kinase" evidence="3">
    <location>
        <begin position="152"/>
        <end position="344"/>
    </location>
</feature>
<feature type="binding site" evidence="2">
    <location>
        <position position="58"/>
    </location>
    <ligand>
        <name>[4Fe-4S] cluster</name>
        <dbReference type="ChEBI" id="CHEBI:49883"/>
    </ligand>
</feature>
<feature type="binding site" evidence="2">
    <location>
        <position position="61"/>
    </location>
    <ligand>
        <name>[4Fe-4S] cluster</name>
        <dbReference type="ChEBI" id="CHEBI:49883"/>
    </ligand>
</feature>
<feature type="binding site" evidence="2">
    <location>
        <position position="73"/>
    </location>
    <ligand>
        <name>[4Fe-4S] cluster</name>
        <dbReference type="ChEBI" id="CHEBI:49883"/>
    </ligand>
</feature>
<feature type="binding site" evidence="2">
    <location>
        <position position="76"/>
    </location>
    <ligand>
        <name>[4Fe-4S] cluster</name>
        <dbReference type="ChEBI" id="CHEBI:49883"/>
    </ligand>
</feature>
<feature type="modified residue" description="Phosphohistidine; by autocatalysis" evidence="3">
    <location>
        <position position="158"/>
    </location>
</feature>
<keyword id="KW-0004">4Fe-4S</keyword>
<keyword id="KW-0067">ATP-binding</keyword>
<keyword id="KW-0963">Cytoplasm</keyword>
<keyword id="KW-0408">Iron</keyword>
<keyword id="KW-0411">Iron-sulfur</keyword>
<keyword id="KW-0418">Kinase</keyword>
<keyword id="KW-0479">Metal-binding</keyword>
<keyword id="KW-0547">Nucleotide-binding</keyword>
<keyword id="KW-0597">Phosphoprotein</keyword>
<keyword id="KW-1185">Reference proteome</keyword>
<keyword id="KW-0808">Transferase</keyword>
<keyword id="KW-0902">Two-component regulatory system</keyword>
<protein>
    <recommendedName>
        <fullName>Oxygen sensor histidine kinase NreB</fullName>
        <ecNumber>2.7.13.3</ecNumber>
    </recommendedName>
    <alternativeName>
        <fullName>Nitrogen regulation protein B</fullName>
    </alternativeName>
</protein>
<gene>
    <name type="primary">nreB</name>
    <name type="ordered locus">SAOUHSC_02676</name>
</gene>
<accession>Q2FVM6</accession>
<sequence length="344" mass="39120">MINEDSIQLDTLLKKYYEHSIEKIVFADDNGKIIAMNDAAKDILSEEDNYSAVANAICHRCEGYTNAYDVQSCKDCFLESMQVQATNFQVFMKTKDQKVMPFTATYQLIDQDRGIHAFTLQNVSSQIEQQEKLHQQRMMRKTISAQENERKRISRELHDSVIQEMLNVDVQLRLLKYQEDTTKLLEDAENIEYIVAKLIDDIRNMSVELRPASLDDLGLEAAFKSYFKQFEENYGIKIIYTSNIKNTRFDSDIETVVYRVVQEAILNALKYADVNEINVGIRQTGRHLVAEVIDAGNGFDPSSKPKGSGLGLYGMNERAELVSGSVNIETKIGEGTNVTLNIPI</sequence>
<proteinExistence type="inferred from homology"/>
<reference key="1">
    <citation type="book" date="2006" name="Gram positive pathogens, 2nd edition">
        <title>The Staphylococcus aureus NCTC 8325 genome.</title>
        <editorList>
            <person name="Fischetti V."/>
            <person name="Novick R."/>
            <person name="Ferretti J."/>
            <person name="Portnoy D."/>
            <person name="Rood J."/>
        </editorList>
        <authorList>
            <person name="Gillaspy A.F."/>
            <person name="Worrell V."/>
            <person name="Orvis J."/>
            <person name="Roe B.A."/>
            <person name="Dyer D.W."/>
            <person name="Iandolo J.J."/>
        </authorList>
    </citation>
    <scope>NUCLEOTIDE SEQUENCE [LARGE SCALE GENOMIC DNA]</scope>
    <source>
        <strain>NCTC 8325 / PS 47</strain>
    </source>
</reference>